<protein>
    <recommendedName>
        <fullName>Protein RIK</fullName>
    </recommendedName>
    <alternativeName>
        <fullName>Rough sheath 2-interacting KH domain protein</fullName>
        <shortName>RS2-interacting KH domain protein</shortName>
    </alternativeName>
</protein>
<evidence type="ECO:0000250" key="1"/>
<evidence type="ECO:0000256" key="2">
    <source>
        <dbReference type="SAM" id="MobiDB-lite"/>
    </source>
</evidence>
<evidence type="ECO:0000269" key="3">
    <source>
    </source>
</evidence>
<evidence type="ECO:0000303" key="4">
    <source>
    </source>
</evidence>
<evidence type="ECO:0000305" key="5"/>
<accession>Q9LIA4</accession>
<accession>Q32SG0</accession>
<accession>Q8VZ97</accession>
<proteinExistence type="evidence at protein level"/>
<gene>
    <name type="primary">RIK</name>
    <name type="ordered locus">At3g29390</name>
    <name type="ORF">MUO10.13</name>
</gene>
<comment type="subunit">
    <text evidence="3">Interacts with AS1.</text>
</comment>
<comment type="subcellular location">
    <subcellularLocation>
        <location evidence="1">Nucleus</location>
    </subcellularLocation>
</comment>
<comment type="alternative products">
    <event type="alternative splicing"/>
    <isoform>
        <id>Q9LIA4-1</id>
        <name>1</name>
        <sequence type="displayed"/>
    </isoform>
    <isoform>
        <id>Q9LIA4-2</id>
        <name>2</name>
        <sequence type="described" ref="VSP_027565"/>
    </isoform>
</comment>
<comment type="tissue specificity">
    <text evidence="3">Expressed in vegetative tissues.</text>
</comment>
<comment type="sequence caution" evidence="5">
    <conflict type="erroneous gene model prediction">
        <sequence resource="EMBL-CDS" id="BAB02585"/>
    </conflict>
</comment>
<sequence>MTEDNDEARVPLSDSSTTNDASRTRQRRKRKWDKPAEQLVAAGVAFPQLLPLGNTMNVPSMSPLLQTLSVPLAVPKVNQPKIQDEVIIAREIVINDAEASLRHRLTKRSTQEDIQRSTGAVVITRGKYRPPNAPPDGEKPLYLHISAAAQLQLKETTERILAVDRAAAMIEEMMKQKSISQIGSVGLQTVKMLSTCVYLGFEADPSSNVAARIRGPNDQYINHIMNETGATVVLRGRGSGSLENQHGDEAQLPLHLLLSGSNPKSIDDAKRLAENLMDTISVEFGASRVSSSKVYGAVPPPQQLISGAPGSDQENQNLISTYGLMTSIPITAPPYAVSSFPVTPATSLYPQFPVMQSLGISNGGPSQPVAGGTSYSGYAGIYPQATPLQQVAQVLKQSISPVISTVPPTMLTATSLSIPSDNASNEMERRPPRKRKFQELPADCKVPEKDKQQSELAMTGDVTPSANRVRSPPSPRSVMPPPPPKTIAPPPSKTMSPPSSKSMLPPPPRSKTMSPLSSKSMLPPPPRFTLTTQRSRLQDNHISVKKPNPVPDTLIKLMEYGDDEDDDDDPDEPLTTRS</sequence>
<keyword id="KW-0025">Alternative splicing</keyword>
<keyword id="KW-0539">Nucleus</keyword>
<keyword id="KW-1185">Reference proteome</keyword>
<keyword id="KW-0694">RNA-binding</keyword>
<name>RIK_ARATH</name>
<dbReference type="EMBL" id="AY940684">
    <property type="protein sequence ID" value="AAY24687.1"/>
    <property type="molecule type" value="mRNA"/>
</dbReference>
<dbReference type="EMBL" id="AP001309">
    <property type="protein sequence ID" value="BAB02585.1"/>
    <property type="status" value="ALT_SEQ"/>
    <property type="molecule type" value="Genomic_DNA"/>
</dbReference>
<dbReference type="EMBL" id="CP002686">
    <property type="protein sequence ID" value="AEE77580.1"/>
    <property type="molecule type" value="Genomic_DNA"/>
</dbReference>
<dbReference type="EMBL" id="AY065141">
    <property type="protein sequence ID" value="AAL38317.1"/>
    <property type="molecule type" value="mRNA"/>
</dbReference>
<dbReference type="EMBL" id="AY081591">
    <property type="protein sequence ID" value="AAM10153.1"/>
    <property type="molecule type" value="mRNA"/>
</dbReference>
<dbReference type="RefSeq" id="NP_566850.3">
    <molecule id="Q9LIA4-1"/>
    <property type="nucleotide sequence ID" value="NM_113865.4"/>
</dbReference>
<dbReference type="FunCoup" id="Q9LIA4">
    <property type="interactions" value="119"/>
</dbReference>
<dbReference type="IntAct" id="Q9LIA4">
    <property type="interactions" value="1"/>
</dbReference>
<dbReference type="STRING" id="3702.Q9LIA4"/>
<dbReference type="GlyGen" id="Q9LIA4">
    <property type="glycosylation" value="1 site"/>
</dbReference>
<dbReference type="iPTMnet" id="Q9LIA4"/>
<dbReference type="PaxDb" id="3702-AT3G29390.1"/>
<dbReference type="ProteomicsDB" id="226839">
    <molecule id="Q9LIA4-1"/>
</dbReference>
<dbReference type="EnsemblPlants" id="AT3G29390.1">
    <molecule id="Q9LIA4-1"/>
    <property type="protein sequence ID" value="AT3G29390.1"/>
    <property type="gene ID" value="AT3G29390"/>
</dbReference>
<dbReference type="GeneID" id="822600"/>
<dbReference type="Gramene" id="AT3G29390.1">
    <molecule id="Q9LIA4-1"/>
    <property type="protein sequence ID" value="AT3G29390.1"/>
    <property type="gene ID" value="AT3G29390"/>
</dbReference>
<dbReference type="KEGG" id="ath:AT3G29390"/>
<dbReference type="Araport" id="AT3G29390"/>
<dbReference type="TAIR" id="AT3G29390">
    <property type="gene designation" value="RIK"/>
</dbReference>
<dbReference type="eggNOG" id="KOG1960">
    <property type="taxonomic scope" value="Eukaryota"/>
</dbReference>
<dbReference type="HOGENOM" id="CLU_028572_0_0_1"/>
<dbReference type="InParanoid" id="Q9LIA4"/>
<dbReference type="OMA" id="ATPKPFW"/>
<dbReference type="PhylomeDB" id="Q9LIA4"/>
<dbReference type="PRO" id="PR:Q9LIA4"/>
<dbReference type="Proteomes" id="UP000006548">
    <property type="component" value="Chromosome 3"/>
</dbReference>
<dbReference type="ExpressionAtlas" id="Q9LIA4">
    <property type="expression patterns" value="baseline and differential"/>
</dbReference>
<dbReference type="GO" id="GO:0005634">
    <property type="term" value="C:nucleus"/>
    <property type="evidence" value="ECO:0000304"/>
    <property type="project" value="TAIR"/>
</dbReference>
<dbReference type="GO" id="GO:0003723">
    <property type="term" value="F:RNA binding"/>
    <property type="evidence" value="ECO:0000304"/>
    <property type="project" value="TAIR"/>
</dbReference>
<dbReference type="CDD" id="cd22471">
    <property type="entry name" value="KH-I_RIK_like_rpt1"/>
    <property type="match status" value="1"/>
</dbReference>
<dbReference type="CDD" id="cd22472">
    <property type="entry name" value="KH-I_RIK_like_rpt2"/>
    <property type="match status" value="1"/>
</dbReference>
<dbReference type="FunFam" id="3.30.1370.10:FF:000037">
    <property type="entry name" value="KH domain protein"/>
    <property type="match status" value="1"/>
</dbReference>
<dbReference type="Gene3D" id="3.30.1370.10">
    <property type="entry name" value="K Homology domain, type 1"/>
    <property type="match status" value="1"/>
</dbReference>
<dbReference type="InterPro" id="IPR055256">
    <property type="entry name" value="KH_1_KHDC4/BBP-like"/>
</dbReference>
<dbReference type="InterPro" id="IPR036612">
    <property type="entry name" value="KH_dom_type_1_sf"/>
</dbReference>
<dbReference type="InterPro" id="IPR056149">
    <property type="entry name" value="PRP5/DDX46/KHDC4_KH"/>
</dbReference>
<dbReference type="InterPro" id="IPR031121">
    <property type="entry name" value="RIK/BLOM7"/>
</dbReference>
<dbReference type="PANTHER" id="PTHR15744">
    <property type="entry name" value="BLOM7"/>
    <property type="match status" value="1"/>
</dbReference>
<dbReference type="PANTHER" id="PTHR15744:SF0">
    <property type="entry name" value="KH HOMOLOGY DOMAIN-CONTAINING PROTEIN 4"/>
    <property type="match status" value="1"/>
</dbReference>
<dbReference type="Pfam" id="PF22675">
    <property type="entry name" value="KH-I_KHDC4-BBP"/>
    <property type="match status" value="1"/>
</dbReference>
<dbReference type="Pfam" id="PF23469">
    <property type="entry name" value="KH_12"/>
    <property type="match status" value="1"/>
</dbReference>
<dbReference type="SUPFAM" id="SSF54791">
    <property type="entry name" value="Eukaryotic type KH-domain (KH-domain type I)"/>
    <property type="match status" value="1"/>
</dbReference>
<reference key="1">
    <citation type="journal article" date="2005" name="Plant Cell">
        <title>Maize rough sheath2 and its Arabidopsis orthologue ASYMMETRIC LEAVES1 interact with HIRA, a predicted histone chaperone, to maintain knox gene silencing and determinacy during organogenesis.</title>
        <authorList>
            <person name="Phelps-Durr T.L."/>
            <person name="Thomas J."/>
            <person name="Vahab P."/>
            <person name="Timmermans M.C.P."/>
        </authorList>
    </citation>
    <scope>NUCLEOTIDE SEQUENCE [MRNA] (ISOFORM 1)</scope>
    <scope>TISSUE SPECIFICITY</scope>
    <scope>INTERACTION WITH AS1</scope>
</reference>
<reference key="2">
    <citation type="journal article" date="2000" name="DNA Res.">
        <title>Structural analysis of Arabidopsis thaliana chromosome 3. II. Sequence features of the 4,251,695 bp regions covered by 90 P1, TAC and BAC clones.</title>
        <authorList>
            <person name="Kaneko T."/>
            <person name="Katoh T."/>
            <person name="Sato S."/>
            <person name="Nakamura Y."/>
            <person name="Asamizu E."/>
            <person name="Tabata S."/>
        </authorList>
    </citation>
    <scope>NUCLEOTIDE SEQUENCE [LARGE SCALE GENOMIC DNA]</scope>
    <source>
        <strain>cv. Columbia</strain>
    </source>
</reference>
<reference key="3">
    <citation type="journal article" date="2017" name="Plant J.">
        <title>Araport11: a complete reannotation of the Arabidopsis thaliana reference genome.</title>
        <authorList>
            <person name="Cheng C.Y."/>
            <person name="Krishnakumar V."/>
            <person name="Chan A.P."/>
            <person name="Thibaud-Nissen F."/>
            <person name="Schobel S."/>
            <person name="Town C.D."/>
        </authorList>
    </citation>
    <scope>GENOME REANNOTATION</scope>
    <source>
        <strain>cv. Columbia</strain>
    </source>
</reference>
<reference key="4">
    <citation type="journal article" date="2003" name="Science">
        <title>Empirical analysis of transcriptional activity in the Arabidopsis genome.</title>
        <authorList>
            <person name="Yamada K."/>
            <person name="Lim J."/>
            <person name="Dale J.M."/>
            <person name="Chen H."/>
            <person name="Shinn P."/>
            <person name="Palm C.J."/>
            <person name="Southwick A.M."/>
            <person name="Wu H.C."/>
            <person name="Kim C.J."/>
            <person name="Nguyen M."/>
            <person name="Pham P.K."/>
            <person name="Cheuk R.F."/>
            <person name="Karlin-Newmann G."/>
            <person name="Liu S.X."/>
            <person name="Lam B."/>
            <person name="Sakano H."/>
            <person name="Wu T."/>
            <person name="Yu G."/>
            <person name="Miranda M."/>
            <person name="Quach H.L."/>
            <person name="Tripp M."/>
            <person name="Chang C.H."/>
            <person name="Lee J.M."/>
            <person name="Toriumi M.J."/>
            <person name="Chan M.M."/>
            <person name="Tang C.C."/>
            <person name="Onodera C.S."/>
            <person name="Deng J.M."/>
            <person name="Akiyama K."/>
            <person name="Ansari Y."/>
            <person name="Arakawa T."/>
            <person name="Banh J."/>
            <person name="Banno F."/>
            <person name="Bowser L."/>
            <person name="Brooks S.Y."/>
            <person name="Carninci P."/>
            <person name="Chao Q."/>
            <person name="Choy N."/>
            <person name="Enju A."/>
            <person name="Goldsmith A.D."/>
            <person name="Gurjal M."/>
            <person name="Hansen N.F."/>
            <person name="Hayashizaki Y."/>
            <person name="Johnson-Hopson C."/>
            <person name="Hsuan V.W."/>
            <person name="Iida K."/>
            <person name="Karnes M."/>
            <person name="Khan S."/>
            <person name="Koesema E."/>
            <person name="Ishida J."/>
            <person name="Jiang P.X."/>
            <person name="Jones T."/>
            <person name="Kawai J."/>
            <person name="Kamiya A."/>
            <person name="Meyers C."/>
            <person name="Nakajima M."/>
            <person name="Narusaka M."/>
            <person name="Seki M."/>
            <person name="Sakurai T."/>
            <person name="Satou M."/>
            <person name="Tamse R."/>
            <person name="Vaysberg M."/>
            <person name="Wallender E.K."/>
            <person name="Wong C."/>
            <person name="Yamamura Y."/>
            <person name="Yuan S."/>
            <person name="Shinozaki K."/>
            <person name="Davis R.W."/>
            <person name="Theologis A."/>
            <person name="Ecker J.R."/>
        </authorList>
    </citation>
    <scope>NUCLEOTIDE SEQUENCE [LARGE SCALE MRNA] (ISOFORM 2)</scope>
    <source>
        <strain>cv. Columbia</strain>
    </source>
</reference>
<feature type="chain" id="PRO_0000299130" description="Protein RIK">
    <location>
        <begin position="1"/>
        <end position="578"/>
    </location>
</feature>
<feature type="domain" description="KH">
    <location>
        <begin position="206"/>
        <end position="273"/>
    </location>
</feature>
<feature type="region of interest" description="Disordered" evidence="2">
    <location>
        <begin position="1"/>
        <end position="34"/>
    </location>
</feature>
<feature type="region of interest" description="Disordered" evidence="2">
    <location>
        <begin position="413"/>
        <end position="578"/>
    </location>
</feature>
<feature type="compositionally biased region" description="Polar residues" evidence="2">
    <location>
        <begin position="413"/>
        <end position="425"/>
    </location>
</feature>
<feature type="compositionally biased region" description="Pro residues" evidence="2">
    <location>
        <begin position="472"/>
        <end position="492"/>
    </location>
</feature>
<feature type="compositionally biased region" description="Low complexity" evidence="2">
    <location>
        <begin position="493"/>
        <end position="503"/>
    </location>
</feature>
<feature type="compositionally biased region" description="Low complexity" evidence="2">
    <location>
        <begin position="510"/>
        <end position="521"/>
    </location>
</feature>
<feature type="compositionally biased region" description="Acidic residues" evidence="2">
    <location>
        <begin position="560"/>
        <end position="572"/>
    </location>
</feature>
<feature type="splice variant" id="VSP_027565" description="In isoform 2." evidence="4">
    <location>
        <begin position="1"/>
        <end position="276"/>
    </location>
</feature>
<organism>
    <name type="scientific">Arabidopsis thaliana</name>
    <name type="common">Mouse-ear cress</name>
    <dbReference type="NCBI Taxonomy" id="3702"/>
    <lineage>
        <taxon>Eukaryota</taxon>
        <taxon>Viridiplantae</taxon>
        <taxon>Streptophyta</taxon>
        <taxon>Embryophyta</taxon>
        <taxon>Tracheophyta</taxon>
        <taxon>Spermatophyta</taxon>
        <taxon>Magnoliopsida</taxon>
        <taxon>eudicotyledons</taxon>
        <taxon>Gunneridae</taxon>
        <taxon>Pentapetalae</taxon>
        <taxon>rosids</taxon>
        <taxon>malvids</taxon>
        <taxon>Brassicales</taxon>
        <taxon>Brassicaceae</taxon>
        <taxon>Camelineae</taxon>
        <taxon>Arabidopsis</taxon>
    </lineage>
</organism>